<comment type="function">
    <text evidence="1">Non-catalytic component of the RNA exosome complex which has 3'-&gt;5' exoribonuclease activity and participates in a multitude of cellular RNA processing and degradation events.</text>
</comment>
<comment type="subunit">
    <text evidence="1">Component of the RNA exosome complex.</text>
</comment>
<comment type="subcellular location">
    <subcellularLocation>
        <location evidence="1">Nucleus</location>
        <location evidence="1">Nucleolus</location>
    </subcellularLocation>
    <subcellularLocation>
        <location evidence="1">Cytoplasm</location>
    </subcellularLocation>
    <subcellularLocation>
        <location evidence="1">Nucleus</location>
    </subcellularLocation>
</comment>
<comment type="similarity">
    <text evidence="2">Belongs to the RNase PH family.</text>
</comment>
<gene>
    <name type="primary">exosc7</name>
    <name type="synonym">rrp42</name>
    <name type="ORF">DDB_G0280251</name>
</gene>
<accession>Q54VM4</accession>
<sequence>MQKISPSESLFIQQGVENNIRSDGRNRVDYRNFAIETGEIIHANGSARVKLSQTEVLVGVKAEITHIQSEITSNLQQSDTSKRLVFSVNCCPSASPEFEGKGSEFLNIELSKQLERLYSHPNVIKNLKLTNPIISNNNNNNNKIKEAEEGKEKEKEGDIITNSGDDNCFSIVSGKYYWTLYVDAIVLDSDGNLFDALSIACRSALQNTRIPRVKAIQGEYEEITFEVSDDPEDTLSLSIDNVPICVTLTKIGNQFVIDTTLQEELCMNARLTVGVNSLANICSIQKGGIDGLDPTTINQMINTAKVVGVKILNIMDKTLKEISN</sequence>
<keyword id="KW-0963">Cytoplasm</keyword>
<keyword id="KW-0271">Exosome</keyword>
<keyword id="KW-0539">Nucleus</keyword>
<keyword id="KW-1185">Reference proteome</keyword>
<keyword id="KW-0694">RNA-binding</keyword>
<keyword id="KW-0698">rRNA processing</keyword>
<organism>
    <name type="scientific">Dictyostelium discoideum</name>
    <name type="common">Social amoeba</name>
    <dbReference type="NCBI Taxonomy" id="44689"/>
    <lineage>
        <taxon>Eukaryota</taxon>
        <taxon>Amoebozoa</taxon>
        <taxon>Evosea</taxon>
        <taxon>Eumycetozoa</taxon>
        <taxon>Dictyostelia</taxon>
        <taxon>Dictyosteliales</taxon>
        <taxon>Dictyosteliaceae</taxon>
        <taxon>Dictyostelium</taxon>
    </lineage>
</organism>
<reference key="1">
    <citation type="journal article" date="2005" name="Nature">
        <title>The genome of the social amoeba Dictyostelium discoideum.</title>
        <authorList>
            <person name="Eichinger L."/>
            <person name="Pachebat J.A."/>
            <person name="Gloeckner G."/>
            <person name="Rajandream M.A."/>
            <person name="Sucgang R."/>
            <person name="Berriman M."/>
            <person name="Song J."/>
            <person name="Olsen R."/>
            <person name="Szafranski K."/>
            <person name="Xu Q."/>
            <person name="Tunggal B."/>
            <person name="Kummerfeld S."/>
            <person name="Madera M."/>
            <person name="Konfortov B.A."/>
            <person name="Rivero F."/>
            <person name="Bankier A.T."/>
            <person name="Lehmann R."/>
            <person name="Hamlin N."/>
            <person name="Davies R."/>
            <person name="Gaudet P."/>
            <person name="Fey P."/>
            <person name="Pilcher K."/>
            <person name="Chen G."/>
            <person name="Saunders D."/>
            <person name="Sodergren E.J."/>
            <person name="Davis P."/>
            <person name="Kerhornou A."/>
            <person name="Nie X."/>
            <person name="Hall N."/>
            <person name="Anjard C."/>
            <person name="Hemphill L."/>
            <person name="Bason N."/>
            <person name="Farbrother P."/>
            <person name="Desany B."/>
            <person name="Just E."/>
            <person name="Morio T."/>
            <person name="Rost R."/>
            <person name="Churcher C.M."/>
            <person name="Cooper J."/>
            <person name="Haydock S."/>
            <person name="van Driessche N."/>
            <person name="Cronin A."/>
            <person name="Goodhead I."/>
            <person name="Muzny D.M."/>
            <person name="Mourier T."/>
            <person name="Pain A."/>
            <person name="Lu M."/>
            <person name="Harper D."/>
            <person name="Lindsay R."/>
            <person name="Hauser H."/>
            <person name="James K.D."/>
            <person name="Quiles M."/>
            <person name="Madan Babu M."/>
            <person name="Saito T."/>
            <person name="Buchrieser C."/>
            <person name="Wardroper A."/>
            <person name="Felder M."/>
            <person name="Thangavelu M."/>
            <person name="Johnson D."/>
            <person name="Knights A."/>
            <person name="Loulseged H."/>
            <person name="Mungall K.L."/>
            <person name="Oliver K."/>
            <person name="Price C."/>
            <person name="Quail M.A."/>
            <person name="Urushihara H."/>
            <person name="Hernandez J."/>
            <person name="Rabbinowitsch E."/>
            <person name="Steffen D."/>
            <person name="Sanders M."/>
            <person name="Ma J."/>
            <person name="Kohara Y."/>
            <person name="Sharp S."/>
            <person name="Simmonds M.N."/>
            <person name="Spiegler S."/>
            <person name="Tivey A."/>
            <person name="Sugano S."/>
            <person name="White B."/>
            <person name="Walker D."/>
            <person name="Woodward J.R."/>
            <person name="Winckler T."/>
            <person name="Tanaka Y."/>
            <person name="Shaulsky G."/>
            <person name="Schleicher M."/>
            <person name="Weinstock G.M."/>
            <person name="Rosenthal A."/>
            <person name="Cox E.C."/>
            <person name="Chisholm R.L."/>
            <person name="Gibbs R.A."/>
            <person name="Loomis W.F."/>
            <person name="Platzer M."/>
            <person name="Kay R.R."/>
            <person name="Williams J.G."/>
            <person name="Dear P.H."/>
            <person name="Noegel A.A."/>
            <person name="Barrell B.G."/>
            <person name="Kuspa A."/>
        </authorList>
    </citation>
    <scope>NUCLEOTIDE SEQUENCE [LARGE SCALE GENOMIC DNA]</scope>
    <source>
        <strain>AX4</strain>
    </source>
</reference>
<name>EXOS7_DICDI</name>
<dbReference type="EMBL" id="AAFI02000035">
    <property type="protein sequence ID" value="EAL67352.1"/>
    <property type="molecule type" value="Genomic_DNA"/>
</dbReference>
<dbReference type="RefSeq" id="XP_641331.1">
    <property type="nucleotide sequence ID" value="XM_636239.1"/>
</dbReference>
<dbReference type="SMR" id="Q54VM4"/>
<dbReference type="FunCoup" id="Q54VM4">
    <property type="interactions" value="485"/>
</dbReference>
<dbReference type="STRING" id="44689.Q54VM4"/>
<dbReference type="PaxDb" id="44689-DDB0206469"/>
<dbReference type="EnsemblProtists" id="EAL67352">
    <property type="protein sequence ID" value="EAL67352"/>
    <property type="gene ID" value="DDB_G0280251"/>
</dbReference>
<dbReference type="GeneID" id="8622465"/>
<dbReference type="KEGG" id="ddi:DDB_G0280251"/>
<dbReference type="dictyBase" id="DDB_G0280251"/>
<dbReference type="VEuPathDB" id="AmoebaDB:DDB_G0280251"/>
<dbReference type="eggNOG" id="KOG1612">
    <property type="taxonomic scope" value="Eukaryota"/>
</dbReference>
<dbReference type="HOGENOM" id="CLU_038194_4_2_1"/>
<dbReference type="InParanoid" id="Q54VM4"/>
<dbReference type="OMA" id="YNTRIPK"/>
<dbReference type="PhylomeDB" id="Q54VM4"/>
<dbReference type="Reactome" id="R-DDI-429958">
    <property type="pathway name" value="mRNA decay by 3' to 5' exoribonuclease"/>
</dbReference>
<dbReference type="Reactome" id="R-DDI-450385">
    <property type="pathway name" value="Butyrate Response Factor 1 (BRF1) binds and destabilizes mRNA"/>
</dbReference>
<dbReference type="Reactome" id="R-DDI-450513">
    <property type="pathway name" value="Tristetraprolin (TTP, ZFP36) binds and destabilizes mRNA"/>
</dbReference>
<dbReference type="Reactome" id="R-DDI-6791226">
    <property type="pathway name" value="Major pathway of rRNA processing in the nucleolus and cytosol"/>
</dbReference>
<dbReference type="PRO" id="PR:Q54VM4"/>
<dbReference type="Proteomes" id="UP000002195">
    <property type="component" value="Chromosome 3"/>
</dbReference>
<dbReference type="GO" id="GO:0000177">
    <property type="term" value="C:cytoplasmic exosome (RNase complex)"/>
    <property type="evidence" value="ECO:0000318"/>
    <property type="project" value="GO_Central"/>
</dbReference>
<dbReference type="GO" id="GO:0000176">
    <property type="term" value="C:nuclear exosome (RNase complex)"/>
    <property type="evidence" value="ECO:0000318"/>
    <property type="project" value="GO_Central"/>
</dbReference>
<dbReference type="GO" id="GO:0005730">
    <property type="term" value="C:nucleolus"/>
    <property type="evidence" value="ECO:0007669"/>
    <property type="project" value="UniProtKB-SubCell"/>
</dbReference>
<dbReference type="GO" id="GO:0035925">
    <property type="term" value="F:mRNA 3'-UTR AU-rich region binding"/>
    <property type="evidence" value="ECO:0000318"/>
    <property type="project" value="GO_Central"/>
</dbReference>
<dbReference type="GO" id="GO:0000467">
    <property type="term" value="P:exonucleolytic trimming to generate mature 3'-end of 5.8S rRNA from tricistronic rRNA transcript (SSU-rRNA, 5.8S rRNA, LSU-rRNA)"/>
    <property type="evidence" value="ECO:0000318"/>
    <property type="project" value="GO_Central"/>
</dbReference>
<dbReference type="GO" id="GO:0071028">
    <property type="term" value="P:nuclear mRNA surveillance"/>
    <property type="evidence" value="ECO:0000318"/>
    <property type="project" value="GO_Central"/>
</dbReference>
<dbReference type="GO" id="GO:0071035">
    <property type="term" value="P:nuclear polyadenylation-dependent rRNA catabolic process"/>
    <property type="evidence" value="ECO:0000318"/>
    <property type="project" value="GO_Central"/>
</dbReference>
<dbReference type="GO" id="GO:0016075">
    <property type="term" value="P:rRNA catabolic process"/>
    <property type="evidence" value="ECO:0000318"/>
    <property type="project" value="GO_Central"/>
</dbReference>
<dbReference type="GO" id="GO:0071038">
    <property type="term" value="P:TRAMP-dependent tRNA surveillance pathway"/>
    <property type="evidence" value="ECO:0000318"/>
    <property type="project" value="GO_Central"/>
</dbReference>
<dbReference type="GO" id="GO:0034473">
    <property type="term" value="P:U1 snRNA 3'-end processing"/>
    <property type="evidence" value="ECO:0000318"/>
    <property type="project" value="GO_Central"/>
</dbReference>
<dbReference type="GO" id="GO:0034475">
    <property type="term" value="P:U4 snRNA 3'-end processing"/>
    <property type="evidence" value="ECO:0000318"/>
    <property type="project" value="GO_Central"/>
</dbReference>
<dbReference type="GO" id="GO:0034476">
    <property type="term" value="P:U5 snRNA 3'-end processing"/>
    <property type="evidence" value="ECO:0000318"/>
    <property type="project" value="GO_Central"/>
</dbReference>
<dbReference type="CDD" id="cd11367">
    <property type="entry name" value="RNase_PH_RRP42"/>
    <property type="match status" value="1"/>
</dbReference>
<dbReference type="Gene3D" id="3.30.230.70">
    <property type="entry name" value="GHMP Kinase, N-terminal domain"/>
    <property type="match status" value="1"/>
</dbReference>
<dbReference type="InterPro" id="IPR001247">
    <property type="entry name" value="ExoRNase_PH_dom1"/>
</dbReference>
<dbReference type="InterPro" id="IPR015847">
    <property type="entry name" value="ExoRNase_PH_dom2"/>
</dbReference>
<dbReference type="InterPro" id="IPR036345">
    <property type="entry name" value="ExoRNase_PH_dom2_sf"/>
</dbReference>
<dbReference type="InterPro" id="IPR050590">
    <property type="entry name" value="Exosome_comp_Rrp42_subfam"/>
</dbReference>
<dbReference type="InterPro" id="IPR027408">
    <property type="entry name" value="PNPase/RNase_PH_dom_sf"/>
</dbReference>
<dbReference type="InterPro" id="IPR020568">
    <property type="entry name" value="Ribosomal_Su5_D2-typ_SF"/>
</dbReference>
<dbReference type="PANTHER" id="PTHR11097:SF8">
    <property type="entry name" value="EXOSOME COMPLEX COMPONENT RRP42"/>
    <property type="match status" value="1"/>
</dbReference>
<dbReference type="PANTHER" id="PTHR11097">
    <property type="entry name" value="EXOSOME COMPLEX EXONUCLEASE RIBOSOMAL RNA PROCESSING PROTEIN"/>
    <property type="match status" value="1"/>
</dbReference>
<dbReference type="Pfam" id="PF01138">
    <property type="entry name" value="RNase_PH"/>
    <property type="match status" value="1"/>
</dbReference>
<dbReference type="Pfam" id="PF03725">
    <property type="entry name" value="RNase_PH_C"/>
    <property type="match status" value="1"/>
</dbReference>
<dbReference type="SUPFAM" id="SSF55666">
    <property type="entry name" value="Ribonuclease PH domain 2-like"/>
    <property type="match status" value="1"/>
</dbReference>
<dbReference type="SUPFAM" id="SSF54211">
    <property type="entry name" value="Ribosomal protein S5 domain 2-like"/>
    <property type="match status" value="1"/>
</dbReference>
<protein>
    <recommendedName>
        <fullName>Putative exosome complex exonuclease RRP42</fullName>
    </recommendedName>
    <alternativeName>
        <fullName>Exosome component 7</fullName>
    </alternativeName>
    <alternativeName>
        <fullName>Ribosomal RNA-processing protein 42</fullName>
    </alternativeName>
</protein>
<proteinExistence type="inferred from homology"/>
<evidence type="ECO:0000250" key="1">
    <source>
        <dbReference type="UniProtKB" id="Q15024"/>
    </source>
</evidence>
<evidence type="ECO:0000305" key="2"/>
<feature type="chain" id="PRO_0000356173" description="Putative exosome complex exonuclease RRP42">
    <location>
        <begin position="1"/>
        <end position="324"/>
    </location>
</feature>